<keyword id="KW-0046">Antibiotic resistance</keyword>
<keyword id="KW-0997">Cell inner membrane</keyword>
<keyword id="KW-1003">Cell membrane</keyword>
<keyword id="KW-0133">Cell shape</keyword>
<keyword id="KW-0961">Cell wall biogenesis/degradation</keyword>
<keyword id="KW-0378">Hydrolase</keyword>
<keyword id="KW-0472">Membrane</keyword>
<keyword id="KW-0573">Peptidoglycan synthesis</keyword>
<keyword id="KW-0812">Transmembrane</keyword>
<keyword id="KW-1133">Transmembrane helix</keyword>
<reference key="1">
    <citation type="journal article" date="2007" name="PLoS Genet.">
        <title>Meningococcal genetic variation mechanisms viewed through comparative analysis of serogroup C strain FAM18.</title>
        <authorList>
            <person name="Bentley S.D."/>
            <person name="Vernikos G.S."/>
            <person name="Snyder L.A.S."/>
            <person name="Churcher C."/>
            <person name="Arrowsmith C."/>
            <person name="Chillingworth T."/>
            <person name="Cronin A."/>
            <person name="Davis P.H."/>
            <person name="Holroyd N.E."/>
            <person name="Jagels K."/>
            <person name="Maddison M."/>
            <person name="Moule S."/>
            <person name="Rabbinowitsch E."/>
            <person name="Sharp S."/>
            <person name="Unwin L."/>
            <person name="Whitehead S."/>
            <person name="Quail M.A."/>
            <person name="Achtman M."/>
            <person name="Barrell B.G."/>
            <person name="Saunders N.J."/>
            <person name="Parkhill J."/>
        </authorList>
    </citation>
    <scope>NUCLEOTIDE SEQUENCE [LARGE SCALE GENOMIC DNA]</scope>
    <source>
        <strain>ATCC 700532 / DSM 15464 / FAM18</strain>
    </source>
</reference>
<protein>
    <recommendedName>
        <fullName evidence="1">Undecaprenyl-diphosphatase</fullName>
        <ecNumber evidence="1">3.6.1.27</ecNumber>
    </recommendedName>
    <alternativeName>
        <fullName evidence="1">Bacitracin resistance protein</fullName>
    </alternativeName>
    <alternativeName>
        <fullName evidence="1">Undecaprenyl pyrophosphate phosphatase</fullName>
    </alternativeName>
</protein>
<sequence length="273" mass="30459">MDFLIVLKALMMGLVEGFTEFLPISSTGHLIVFGNLIDFHSNHKVFEITIQLGAVLAVVFEYRQRFSNVLHGVGKDRKANRFVLNLAIAFIPAAVMGLLFGKQIKEYLFNPLSVAVMLVLGGFFILWVEKRQSRAEPKIVDVDALRPIDALMIGVAQVFALVPGTSRSGSTIMGGMLWGIERKTATEFSFFLAVPMMVAATAYDVLKHYRFFTLHDVGLILIGFVAAFVSGLVAVKALLRFVSKKNYIPFAYYRIVFGIAIIILWLSGWISWE</sequence>
<evidence type="ECO:0000255" key="1">
    <source>
        <dbReference type="HAMAP-Rule" id="MF_01006"/>
    </source>
</evidence>
<gene>
    <name evidence="1" type="primary">uppP</name>
    <name type="ordered locus">NMC1759</name>
</gene>
<feature type="chain" id="PRO_0000290735" description="Undecaprenyl-diphosphatase">
    <location>
        <begin position="1"/>
        <end position="273"/>
    </location>
</feature>
<feature type="transmembrane region" description="Helical" evidence="1">
    <location>
        <begin position="13"/>
        <end position="35"/>
    </location>
</feature>
<feature type="transmembrane region" description="Helical" evidence="1">
    <location>
        <begin position="45"/>
        <end position="62"/>
    </location>
</feature>
<feature type="transmembrane region" description="Helical" evidence="1">
    <location>
        <begin position="82"/>
        <end position="102"/>
    </location>
</feature>
<feature type="transmembrane region" description="Helical" evidence="1">
    <location>
        <begin position="108"/>
        <end position="128"/>
    </location>
</feature>
<feature type="transmembrane region" description="Helical" evidence="1">
    <location>
        <begin position="186"/>
        <end position="206"/>
    </location>
</feature>
<feature type="transmembrane region" description="Helical" evidence="1">
    <location>
        <begin position="219"/>
        <end position="239"/>
    </location>
</feature>
<feature type="transmembrane region" description="Helical" evidence="1">
    <location>
        <begin position="250"/>
        <end position="270"/>
    </location>
</feature>
<proteinExistence type="inferred from homology"/>
<dbReference type="EC" id="3.6.1.27" evidence="1"/>
<dbReference type="EMBL" id="AM421808">
    <property type="protein sequence ID" value="CAM10931.1"/>
    <property type="molecule type" value="Genomic_DNA"/>
</dbReference>
<dbReference type="RefSeq" id="WP_002220359.1">
    <property type="nucleotide sequence ID" value="NC_008767.1"/>
</dbReference>
<dbReference type="SMR" id="A1KVM7"/>
<dbReference type="KEGG" id="nmc:NMC1759"/>
<dbReference type="HOGENOM" id="CLU_060296_2_0_4"/>
<dbReference type="Proteomes" id="UP000002286">
    <property type="component" value="Chromosome"/>
</dbReference>
<dbReference type="GO" id="GO:0005886">
    <property type="term" value="C:plasma membrane"/>
    <property type="evidence" value="ECO:0007669"/>
    <property type="project" value="UniProtKB-SubCell"/>
</dbReference>
<dbReference type="GO" id="GO:0050380">
    <property type="term" value="F:undecaprenyl-diphosphatase activity"/>
    <property type="evidence" value="ECO:0007669"/>
    <property type="project" value="UniProtKB-UniRule"/>
</dbReference>
<dbReference type="GO" id="GO:0071555">
    <property type="term" value="P:cell wall organization"/>
    <property type="evidence" value="ECO:0007669"/>
    <property type="project" value="UniProtKB-KW"/>
</dbReference>
<dbReference type="GO" id="GO:0009252">
    <property type="term" value="P:peptidoglycan biosynthetic process"/>
    <property type="evidence" value="ECO:0007669"/>
    <property type="project" value="UniProtKB-KW"/>
</dbReference>
<dbReference type="GO" id="GO:0008360">
    <property type="term" value="P:regulation of cell shape"/>
    <property type="evidence" value="ECO:0007669"/>
    <property type="project" value="UniProtKB-KW"/>
</dbReference>
<dbReference type="GO" id="GO:0046677">
    <property type="term" value="P:response to antibiotic"/>
    <property type="evidence" value="ECO:0007669"/>
    <property type="project" value="UniProtKB-UniRule"/>
</dbReference>
<dbReference type="HAMAP" id="MF_01006">
    <property type="entry name" value="Undec_diphosphatase"/>
    <property type="match status" value="1"/>
</dbReference>
<dbReference type="InterPro" id="IPR003824">
    <property type="entry name" value="UppP"/>
</dbReference>
<dbReference type="NCBIfam" id="NF001389">
    <property type="entry name" value="PRK00281.1-2"/>
    <property type="match status" value="1"/>
</dbReference>
<dbReference type="NCBIfam" id="NF001390">
    <property type="entry name" value="PRK00281.1-4"/>
    <property type="match status" value="1"/>
</dbReference>
<dbReference type="NCBIfam" id="TIGR00753">
    <property type="entry name" value="undec_PP_bacA"/>
    <property type="match status" value="1"/>
</dbReference>
<dbReference type="PANTHER" id="PTHR30622">
    <property type="entry name" value="UNDECAPRENYL-DIPHOSPHATASE"/>
    <property type="match status" value="1"/>
</dbReference>
<dbReference type="PANTHER" id="PTHR30622:SF3">
    <property type="entry name" value="UNDECAPRENYL-DIPHOSPHATASE"/>
    <property type="match status" value="1"/>
</dbReference>
<dbReference type="Pfam" id="PF02673">
    <property type="entry name" value="BacA"/>
    <property type="match status" value="1"/>
</dbReference>
<comment type="function">
    <text evidence="1">Catalyzes the dephosphorylation of undecaprenyl diphosphate (UPP). Confers resistance to bacitracin.</text>
</comment>
<comment type="catalytic activity">
    <reaction evidence="1">
        <text>di-trans,octa-cis-undecaprenyl diphosphate + H2O = di-trans,octa-cis-undecaprenyl phosphate + phosphate + H(+)</text>
        <dbReference type="Rhea" id="RHEA:28094"/>
        <dbReference type="ChEBI" id="CHEBI:15377"/>
        <dbReference type="ChEBI" id="CHEBI:15378"/>
        <dbReference type="ChEBI" id="CHEBI:43474"/>
        <dbReference type="ChEBI" id="CHEBI:58405"/>
        <dbReference type="ChEBI" id="CHEBI:60392"/>
        <dbReference type="EC" id="3.6.1.27"/>
    </reaction>
</comment>
<comment type="subcellular location">
    <subcellularLocation>
        <location evidence="1">Cell inner membrane</location>
        <topology evidence="1">Multi-pass membrane protein</topology>
    </subcellularLocation>
</comment>
<comment type="miscellaneous">
    <text>Bacitracin is thought to be involved in the inhibition of peptidoglycan synthesis by sequestering undecaprenyl diphosphate, thereby reducing the pool of lipid carrier available.</text>
</comment>
<comment type="similarity">
    <text evidence="1">Belongs to the UppP family.</text>
</comment>
<name>UPPP_NEIMF</name>
<accession>A1KVM7</accession>
<organism>
    <name type="scientific">Neisseria meningitidis serogroup C / serotype 2a (strain ATCC 700532 / DSM 15464 / FAM18)</name>
    <dbReference type="NCBI Taxonomy" id="272831"/>
    <lineage>
        <taxon>Bacteria</taxon>
        <taxon>Pseudomonadati</taxon>
        <taxon>Pseudomonadota</taxon>
        <taxon>Betaproteobacteria</taxon>
        <taxon>Neisseriales</taxon>
        <taxon>Neisseriaceae</taxon>
        <taxon>Neisseria</taxon>
    </lineage>
</organism>